<keyword id="KW-1185">Reference proteome</keyword>
<keyword id="KW-0687">Ribonucleoprotein</keyword>
<keyword id="KW-0689">Ribosomal protein</keyword>
<dbReference type="EMBL" id="BX248355">
    <property type="protein sequence ID" value="CAE48976.1"/>
    <property type="molecule type" value="Genomic_DNA"/>
</dbReference>
<dbReference type="RefSeq" id="WP_003848085.1">
    <property type="nucleotide sequence ID" value="NC_002935.2"/>
</dbReference>
<dbReference type="SMR" id="Q6NJD3"/>
<dbReference type="STRING" id="257309.DIP0472"/>
<dbReference type="GeneID" id="97331075"/>
<dbReference type="KEGG" id="cdi:DIP0472"/>
<dbReference type="HOGENOM" id="CLU_122625_1_3_11"/>
<dbReference type="Proteomes" id="UP000002198">
    <property type="component" value="Chromosome"/>
</dbReference>
<dbReference type="GO" id="GO:1990904">
    <property type="term" value="C:ribonucleoprotein complex"/>
    <property type="evidence" value="ECO:0007669"/>
    <property type="project" value="UniProtKB-KW"/>
</dbReference>
<dbReference type="GO" id="GO:0005840">
    <property type="term" value="C:ribosome"/>
    <property type="evidence" value="ECO:0007669"/>
    <property type="project" value="UniProtKB-KW"/>
</dbReference>
<dbReference type="GO" id="GO:0003735">
    <property type="term" value="F:structural constituent of ribosome"/>
    <property type="evidence" value="ECO:0007669"/>
    <property type="project" value="InterPro"/>
</dbReference>
<dbReference type="GO" id="GO:0000049">
    <property type="term" value="F:tRNA binding"/>
    <property type="evidence" value="ECO:0007669"/>
    <property type="project" value="UniProtKB-UniRule"/>
</dbReference>
<dbReference type="GO" id="GO:0006412">
    <property type="term" value="P:translation"/>
    <property type="evidence" value="ECO:0007669"/>
    <property type="project" value="UniProtKB-UniRule"/>
</dbReference>
<dbReference type="FunFam" id="3.30.70.600:FF:000001">
    <property type="entry name" value="30S ribosomal protein S10"/>
    <property type="match status" value="1"/>
</dbReference>
<dbReference type="Gene3D" id="3.30.70.600">
    <property type="entry name" value="Ribosomal protein S10 domain"/>
    <property type="match status" value="1"/>
</dbReference>
<dbReference type="HAMAP" id="MF_00508">
    <property type="entry name" value="Ribosomal_uS10"/>
    <property type="match status" value="1"/>
</dbReference>
<dbReference type="InterPro" id="IPR001848">
    <property type="entry name" value="Ribosomal_uS10"/>
</dbReference>
<dbReference type="InterPro" id="IPR018268">
    <property type="entry name" value="Ribosomal_uS10_CS"/>
</dbReference>
<dbReference type="InterPro" id="IPR027486">
    <property type="entry name" value="Ribosomal_uS10_dom"/>
</dbReference>
<dbReference type="InterPro" id="IPR036838">
    <property type="entry name" value="Ribosomal_uS10_dom_sf"/>
</dbReference>
<dbReference type="NCBIfam" id="NF001861">
    <property type="entry name" value="PRK00596.1"/>
    <property type="match status" value="1"/>
</dbReference>
<dbReference type="NCBIfam" id="TIGR01049">
    <property type="entry name" value="rpsJ_bact"/>
    <property type="match status" value="1"/>
</dbReference>
<dbReference type="PANTHER" id="PTHR11700">
    <property type="entry name" value="30S RIBOSOMAL PROTEIN S10 FAMILY MEMBER"/>
    <property type="match status" value="1"/>
</dbReference>
<dbReference type="Pfam" id="PF00338">
    <property type="entry name" value="Ribosomal_S10"/>
    <property type="match status" value="1"/>
</dbReference>
<dbReference type="PRINTS" id="PR00971">
    <property type="entry name" value="RIBOSOMALS10"/>
</dbReference>
<dbReference type="SMART" id="SM01403">
    <property type="entry name" value="Ribosomal_S10"/>
    <property type="match status" value="1"/>
</dbReference>
<dbReference type="SUPFAM" id="SSF54999">
    <property type="entry name" value="Ribosomal protein S10"/>
    <property type="match status" value="1"/>
</dbReference>
<dbReference type="PROSITE" id="PS00361">
    <property type="entry name" value="RIBOSOMAL_S10"/>
    <property type="match status" value="1"/>
</dbReference>
<reference key="1">
    <citation type="journal article" date="2003" name="Nucleic Acids Res.">
        <title>The complete genome sequence and analysis of Corynebacterium diphtheriae NCTC13129.</title>
        <authorList>
            <person name="Cerdeno-Tarraga A.-M."/>
            <person name="Efstratiou A."/>
            <person name="Dover L.G."/>
            <person name="Holden M.T.G."/>
            <person name="Pallen M.J."/>
            <person name="Bentley S.D."/>
            <person name="Besra G.S."/>
            <person name="Churcher C.M."/>
            <person name="James K.D."/>
            <person name="De Zoysa A."/>
            <person name="Chillingworth T."/>
            <person name="Cronin A."/>
            <person name="Dowd L."/>
            <person name="Feltwell T."/>
            <person name="Hamlin N."/>
            <person name="Holroyd S."/>
            <person name="Jagels K."/>
            <person name="Moule S."/>
            <person name="Quail M.A."/>
            <person name="Rabbinowitsch E."/>
            <person name="Rutherford K.M."/>
            <person name="Thomson N.R."/>
            <person name="Unwin L."/>
            <person name="Whitehead S."/>
            <person name="Barrell B.G."/>
            <person name="Parkhill J."/>
        </authorList>
    </citation>
    <scope>NUCLEOTIDE SEQUENCE [LARGE SCALE GENOMIC DNA]</scope>
    <source>
        <strain>ATCC 700971 / NCTC 13129 / Biotype gravis</strain>
    </source>
</reference>
<feature type="chain" id="PRO_0000146523" description="Small ribosomal subunit protein uS10">
    <location>
        <begin position="1"/>
        <end position="101"/>
    </location>
</feature>
<sequence>MAGQKIRIRLKAYDHEAIDASAKKIVETVTRTGARVVGPVPLPTEKNVYAVIRSPHKYKDSREHFEMRTHKRLIDILDPTPKTVDALMRIDLPASVDVNIQ</sequence>
<accession>Q6NJD3</accession>
<organism>
    <name type="scientific">Corynebacterium diphtheriae (strain ATCC 700971 / NCTC 13129 / Biotype gravis)</name>
    <dbReference type="NCBI Taxonomy" id="257309"/>
    <lineage>
        <taxon>Bacteria</taxon>
        <taxon>Bacillati</taxon>
        <taxon>Actinomycetota</taxon>
        <taxon>Actinomycetes</taxon>
        <taxon>Mycobacteriales</taxon>
        <taxon>Corynebacteriaceae</taxon>
        <taxon>Corynebacterium</taxon>
    </lineage>
</organism>
<gene>
    <name evidence="1" type="primary">rpsJ</name>
    <name type="synonym">rpsX</name>
    <name type="ordered locus">DIP0472</name>
</gene>
<proteinExistence type="inferred from homology"/>
<protein>
    <recommendedName>
        <fullName evidence="1">Small ribosomal subunit protein uS10</fullName>
    </recommendedName>
    <alternativeName>
        <fullName evidence="2">30S ribosomal protein S10</fullName>
    </alternativeName>
</protein>
<comment type="function">
    <text evidence="1">Involved in the binding of tRNA to the ribosomes.</text>
</comment>
<comment type="subunit">
    <text evidence="1">Part of the 30S ribosomal subunit.</text>
</comment>
<comment type="similarity">
    <text evidence="1">Belongs to the universal ribosomal protein uS10 family.</text>
</comment>
<name>RS10_CORDI</name>
<evidence type="ECO:0000255" key="1">
    <source>
        <dbReference type="HAMAP-Rule" id="MF_00508"/>
    </source>
</evidence>
<evidence type="ECO:0000305" key="2"/>